<protein>
    <recommendedName>
        <fullName evidence="1">NAD(P)H-quinone oxidoreductase subunit I, chloroplastic</fullName>
        <ecNumber evidence="1">7.1.1.-</ecNumber>
    </recommendedName>
    <alternativeName>
        <fullName evidence="1">NAD(P)H dehydrogenase subunit I</fullName>
        <shortName evidence="1">NDH subunit I</shortName>
    </alternativeName>
    <alternativeName>
        <fullName evidence="1">NADH-plastoquinone oxidoreductase subunit I</fullName>
    </alternativeName>
</protein>
<organism>
    <name type="scientific">Nicotiana tabacum</name>
    <name type="common">Common tobacco</name>
    <dbReference type="NCBI Taxonomy" id="4097"/>
    <lineage>
        <taxon>Eukaryota</taxon>
        <taxon>Viridiplantae</taxon>
        <taxon>Streptophyta</taxon>
        <taxon>Embryophyta</taxon>
        <taxon>Tracheophyta</taxon>
        <taxon>Spermatophyta</taxon>
        <taxon>Magnoliopsida</taxon>
        <taxon>eudicotyledons</taxon>
        <taxon>Gunneridae</taxon>
        <taxon>Pentapetalae</taxon>
        <taxon>asterids</taxon>
        <taxon>lamiids</taxon>
        <taxon>Solanales</taxon>
        <taxon>Solanaceae</taxon>
        <taxon>Nicotianoideae</taxon>
        <taxon>Nicotianeae</taxon>
        <taxon>Nicotiana</taxon>
    </lineage>
</organism>
<keyword id="KW-0004">4Fe-4S</keyword>
<keyword id="KW-0150">Chloroplast</keyword>
<keyword id="KW-0903">Direct protein sequencing</keyword>
<keyword id="KW-0408">Iron</keyword>
<keyword id="KW-0411">Iron-sulfur</keyword>
<keyword id="KW-0472">Membrane</keyword>
<keyword id="KW-0479">Metal-binding</keyword>
<keyword id="KW-0520">NAD</keyword>
<keyword id="KW-0521">NADP</keyword>
<keyword id="KW-0934">Plastid</keyword>
<keyword id="KW-0618">Plastoquinone</keyword>
<keyword id="KW-0874">Quinone</keyword>
<keyword id="KW-1185">Reference proteome</keyword>
<keyword id="KW-0677">Repeat</keyword>
<keyword id="KW-0793">Thylakoid</keyword>
<keyword id="KW-1278">Translocase</keyword>
<feature type="chain" id="PRO_0000118713" description="NAD(P)H-quinone oxidoreductase subunit I, chloroplastic">
    <location>
        <begin position="1"/>
        <end position="167"/>
    </location>
</feature>
<feature type="domain" description="4Fe-4S ferredoxin-type 1" evidence="1">
    <location>
        <begin position="55"/>
        <end position="84"/>
    </location>
</feature>
<feature type="domain" description="4Fe-4S ferredoxin-type 2" evidence="1">
    <location>
        <begin position="95"/>
        <end position="124"/>
    </location>
</feature>
<feature type="binding site" evidence="1">
    <location>
        <position position="64"/>
    </location>
    <ligand>
        <name>[4Fe-4S] cluster</name>
        <dbReference type="ChEBI" id="CHEBI:49883"/>
        <label>1</label>
    </ligand>
</feature>
<feature type="binding site" evidence="1">
    <location>
        <position position="67"/>
    </location>
    <ligand>
        <name>[4Fe-4S] cluster</name>
        <dbReference type="ChEBI" id="CHEBI:49883"/>
        <label>1</label>
    </ligand>
</feature>
<feature type="binding site" evidence="1">
    <location>
        <position position="70"/>
    </location>
    <ligand>
        <name>[4Fe-4S] cluster</name>
        <dbReference type="ChEBI" id="CHEBI:49883"/>
        <label>1</label>
    </ligand>
</feature>
<feature type="binding site" evidence="1">
    <location>
        <position position="74"/>
    </location>
    <ligand>
        <name>[4Fe-4S] cluster</name>
        <dbReference type="ChEBI" id="CHEBI:49883"/>
        <label>2</label>
    </ligand>
</feature>
<feature type="binding site" evidence="1">
    <location>
        <position position="104"/>
    </location>
    <ligand>
        <name>[4Fe-4S] cluster</name>
        <dbReference type="ChEBI" id="CHEBI:49883"/>
        <label>2</label>
    </ligand>
</feature>
<feature type="binding site" evidence="1">
    <location>
        <position position="107"/>
    </location>
    <ligand>
        <name>[4Fe-4S] cluster</name>
        <dbReference type="ChEBI" id="CHEBI:49883"/>
        <label>2</label>
    </ligand>
</feature>
<feature type="binding site" evidence="1">
    <location>
        <position position="110"/>
    </location>
    <ligand>
        <name>[4Fe-4S] cluster</name>
        <dbReference type="ChEBI" id="CHEBI:49883"/>
        <label>2</label>
    </ligand>
</feature>
<feature type="binding site" evidence="1">
    <location>
        <position position="114"/>
    </location>
    <ligand>
        <name>[4Fe-4S] cluster</name>
        <dbReference type="ChEBI" id="CHEBI:49883"/>
        <label>1</label>
    </ligand>
</feature>
<sequence>MLPMITEFINYGQQTIRAARYIGQGFMITLSHANRLPVTIQYPYEKLITSERFRGRIHFEFDKCIACEVCVRVCPIDLPVVDWKLETDIRKKRLLNYSIDFGICIFCGNCVEYCPTNCLSMTEEYELSTYDRHELNYNQIALGRLPMSVIDDYTIRTISNLPQIKNE</sequence>
<accession>P06252</accession>
<dbReference type="EC" id="7.1.1.-" evidence="1"/>
<dbReference type="EMBL" id="Z00044">
    <property type="protein sequence ID" value="CAA77397.1"/>
    <property type="molecule type" value="Genomic_DNA"/>
</dbReference>
<dbReference type="PIR" id="A00225">
    <property type="entry name" value="FENTB"/>
</dbReference>
<dbReference type="RefSeq" id="NP_054561.1">
    <property type="nucleotide sequence ID" value="NC_001879.2"/>
</dbReference>
<dbReference type="SMR" id="P06252"/>
<dbReference type="GeneID" id="800458"/>
<dbReference type="KEGG" id="nta:800458"/>
<dbReference type="OMA" id="WRPVIDY"/>
<dbReference type="OrthoDB" id="24758at2759"/>
<dbReference type="Proteomes" id="UP000084051">
    <property type="component" value="Unplaced"/>
</dbReference>
<dbReference type="GO" id="GO:0009535">
    <property type="term" value="C:chloroplast thylakoid membrane"/>
    <property type="evidence" value="ECO:0007669"/>
    <property type="project" value="UniProtKB-SubCell"/>
</dbReference>
<dbReference type="GO" id="GO:0051539">
    <property type="term" value="F:4 iron, 4 sulfur cluster binding"/>
    <property type="evidence" value="ECO:0007669"/>
    <property type="project" value="UniProtKB-KW"/>
</dbReference>
<dbReference type="GO" id="GO:0005506">
    <property type="term" value="F:iron ion binding"/>
    <property type="evidence" value="ECO:0007669"/>
    <property type="project" value="UniProtKB-UniRule"/>
</dbReference>
<dbReference type="GO" id="GO:0008137">
    <property type="term" value="F:NADH dehydrogenase (ubiquinone) activity"/>
    <property type="evidence" value="ECO:0007669"/>
    <property type="project" value="InterPro"/>
</dbReference>
<dbReference type="GO" id="GO:0048038">
    <property type="term" value="F:quinone binding"/>
    <property type="evidence" value="ECO:0007669"/>
    <property type="project" value="UniProtKB-KW"/>
</dbReference>
<dbReference type="GO" id="GO:0019684">
    <property type="term" value="P:photosynthesis, light reaction"/>
    <property type="evidence" value="ECO:0007669"/>
    <property type="project" value="UniProtKB-UniRule"/>
</dbReference>
<dbReference type="FunFam" id="3.30.70.3270:FF:000006">
    <property type="entry name" value="NAD(P)H-quinone oxidoreductase subunit I, chloroplastic"/>
    <property type="match status" value="1"/>
</dbReference>
<dbReference type="Gene3D" id="3.30.70.3270">
    <property type="match status" value="1"/>
</dbReference>
<dbReference type="HAMAP" id="MF_01351">
    <property type="entry name" value="NDH1_NuoI"/>
    <property type="match status" value="1"/>
</dbReference>
<dbReference type="InterPro" id="IPR017896">
    <property type="entry name" value="4Fe4S_Fe-S-bd"/>
</dbReference>
<dbReference type="InterPro" id="IPR017900">
    <property type="entry name" value="4Fe4S_Fe_S_CS"/>
</dbReference>
<dbReference type="InterPro" id="IPR010226">
    <property type="entry name" value="NADH_quinone_OxRdtase_chainI"/>
</dbReference>
<dbReference type="InterPro" id="IPR004497">
    <property type="entry name" value="NDHI"/>
</dbReference>
<dbReference type="NCBIfam" id="TIGR00403">
    <property type="entry name" value="ndhI"/>
    <property type="match status" value="1"/>
</dbReference>
<dbReference type="NCBIfam" id="TIGR01971">
    <property type="entry name" value="NuoI"/>
    <property type="match status" value="1"/>
</dbReference>
<dbReference type="NCBIfam" id="NF004537">
    <property type="entry name" value="PRK05888.1-3"/>
    <property type="match status" value="1"/>
</dbReference>
<dbReference type="PANTHER" id="PTHR47275">
    <property type="entry name" value="NAD(P)H-QUINONE OXIDOREDUCTASE SUBUNIT I, CHLOROPLASTIC"/>
    <property type="match status" value="1"/>
</dbReference>
<dbReference type="PANTHER" id="PTHR47275:SF1">
    <property type="entry name" value="NAD(P)H-QUINONE OXIDOREDUCTASE SUBUNIT I, CHLOROPLASTIC"/>
    <property type="match status" value="1"/>
</dbReference>
<dbReference type="Pfam" id="PF00037">
    <property type="entry name" value="Fer4"/>
    <property type="match status" value="2"/>
</dbReference>
<dbReference type="SUPFAM" id="SSF54862">
    <property type="entry name" value="4Fe-4S ferredoxins"/>
    <property type="match status" value="1"/>
</dbReference>
<dbReference type="PROSITE" id="PS00198">
    <property type="entry name" value="4FE4S_FER_1"/>
    <property type="match status" value="2"/>
</dbReference>
<dbReference type="PROSITE" id="PS51379">
    <property type="entry name" value="4FE4S_FER_2"/>
    <property type="match status" value="2"/>
</dbReference>
<proteinExistence type="evidence at protein level"/>
<name>NDHI_TOBAC</name>
<comment type="function">
    <text evidence="1">NDH shuttles electrons from NAD(P)H:plastoquinone, via FMN and iron-sulfur (Fe-S) centers, to quinones in the photosynthetic chain and possibly in a chloroplast respiratory chain. The immediate electron acceptor for the enzyme in this species is believed to be plastoquinone. Couples the redox reaction to proton translocation, and thus conserves the redox energy in a proton gradient.</text>
</comment>
<comment type="catalytic activity">
    <reaction evidence="1">
        <text>a plastoquinone + NADH + (n+1) H(+)(in) = a plastoquinol + NAD(+) + n H(+)(out)</text>
        <dbReference type="Rhea" id="RHEA:42608"/>
        <dbReference type="Rhea" id="RHEA-COMP:9561"/>
        <dbReference type="Rhea" id="RHEA-COMP:9562"/>
        <dbReference type="ChEBI" id="CHEBI:15378"/>
        <dbReference type="ChEBI" id="CHEBI:17757"/>
        <dbReference type="ChEBI" id="CHEBI:57540"/>
        <dbReference type="ChEBI" id="CHEBI:57945"/>
        <dbReference type="ChEBI" id="CHEBI:62192"/>
    </reaction>
</comment>
<comment type="catalytic activity">
    <reaction evidence="1">
        <text>a plastoquinone + NADPH + (n+1) H(+)(in) = a plastoquinol + NADP(+) + n H(+)(out)</text>
        <dbReference type="Rhea" id="RHEA:42612"/>
        <dbReference type="Rhea" id="RHEA-COMP:9561"/>
        <dbReference type="Rhea" id="RHEA-COMP:9562"/>
        <dbReference type="ChEBI" id="CHEBI:15378"/>
        <dbReference type="ChEBI" id="CHEBI:17757"/>
        <dbReference type="ChEBI" id="CHEBI:57783"/>
        <dbReference type="ChEBI" id="CHEBI:58349"/>
        <dbReference type="ChEBI" id="CHEBI:62192"/>
    </reaction>
</comment>
<comment type="cofactor">
    <cofactor evidence="1">
        <name>[4Fe-4S] cluster</name>
        <dbReference type="ChEBI" id="CHEBI:49883"/>
    </cofactor>
    <text evidence="1">Binds 2 [4Fe-4S] clusters per subunit.</text>
</comment>
<comment type="subunit">
    <text evidence="1">NDH is composed of at least 16 different subunits, 5 of which are encoded in the nucleus.</text>
</comment>
<comment type="subcellular location">
    <subcellularLocation>
        <location evidence="1">Plastid</location>
        <location evidence="1">Chloroplast thylakoid membrane</location>
        <topology evidence="1">Peripheral membrane protein</topology>
    </subcellularLocation>
</comment>
<comment type="similarity">
    <text evidence="1">Belongs to the complex I 23 kDa subunit family.</text>
</comment>
<evidence type="ECO:0000255" key="1">
    <source>
        <dbReference type="HAMAP-Rule" id="MF_01351"/>
    </source>
</evidence>
<geneLocation type="chloroplast"/>
<reference key="1">
    <citation type="journal article" date="1986" name="EMBO J.">
        <title>The complete nucleotide sequence of the tobacco chloroplast genome: its gene organization and expression.</title>
        <authorList>
            <person name="Shinozaki K."/>
            <person name="Ohme M."/>
            <person name="Tanaka M."/>
            <person name="Wakasugi T."/>
            <person name="Hayashida N."/>
            <person name="Matsubayashi T."/>
            <person name="Zaita N."/>
            <person name="Chunwongse J."/>
            <person name="Obokata J."/>
            <person name="Yamaguchi-Shinozaki K."/>
            <person name="Ohto C."/>
            <person name="Torazawa K."/>
            <person name="Meng B.-Y."/>
            <person name="Sugita M."/>
            <person name="Deno H."/>
            <person name="Kamogashira T."/>
            <person name="Yamada K."/>
            <person name="Kusuda J."/>
            <person name="Takaiwa F."/>
            <person name="Kato A."/>
            <person name="Tohdoh N."/>
            <person name="Shimada H."/>
            <person name="Sugiura M."/>
        </authorList>
    </citation>
    <scope>NUCLEOTIDE SEQUENCE [LARGE SCALE GENOMIC DNA]</scope>
    <source>
        <strain>cv. Bright Yellow 4</strain>
    </source>
</reference>
<reference key="2">
    <citation type="journal article" date="1990" name="Plant Mol. Biol.">
        <title>A ferredoxin-type iron-sulfur protein gene, frx B, is expressed in the chloroplasts of tobacco and spinach.</title>
        <authorList>
            <person name="Lin C.H."/>
            <person name="Wu M."/>
        </authorList>
    </citation>
    <scope>PROTEIN SEQUENCE OF 64-70 AND 93-99</scope>
</reference>
<gene>
    <name evidence="1" type="primary">ndhI</name>
    <name type="synonym">frxB</name>
</gene>